<dbReference type="EC" id="2.3.3.13" evidence="1"/>
<dbReference type="EMBL" id="AE017126">
    <property type="protein sequence ID" value="AAQ00179.1"/>
    <property type="molecule type" value="Genomic_DNA"/>
</dbReference>
<dbReference type="RefSeq" id="NP_875526.1">
    <property type="nucleotide sequence ID" value="NC_005042.1"/>
</dbReference>
<dbReference type="RefSeq" id="WP_011125286.1">
    <property type="nucleotide sequence ID" value="NC_005042.1"/>
</dbReference>
<dbReference type="SMR" id="Q7VBG1"/>
<dbReference type="STRING" id="167539.Pro_1134"/>
<dbReference type="EnsemblBacteria" id="AAQ00179">
    <property type="protein sequence ID" value="AAQ00179"/>
    <property type="gene ID" value="Pro_1134"/>
</dbReference>
<dbReference type="KEGG" id="pma:Pro_1134"/>
<dbReference type="PATRIC" id="fig|167539.5.peg.1186"/>
<dbReference type="eggNOG" id="COG0119">
    <property type="taxonomic scope" value="Bacteria"/>
</dbReference>
<dbReference type="HOGENOM" id="CLU_022158_0_1_3"/>
<dbReference type="OrthoDB" id="9804858at2"/>
<dbReference type="UniPathway" id="UPA00048">
    <property type="reaction ID" value="UER00070"/>
</dbReference>
<dbReference type="Proteomes" id="UP000001420">
    <property type="component" value="Chromosome"/>
</dbReference>
<dbReference type="GO" id="GO:0005737">
    <property type="term" value="C:cytoplasm"/>
    <property type="evidence" value="ECO:0007669"/>
    <property type="project" value="UniProtKB-SubCell"/>
</dbReference>
<dbReference type="GO" id="GO:0003852">
    <property type="term" value="F:2-isopropylmalate synthase activity"/>
    <property type="evidence" value="ECO:0007669"/>
    <property type="project" value="UniProtKB-UniRule"/>
</dbReference>
<dbReference type="GO" id="GO:0003985">
    <property type="term" value="F:acetyl-CoA C-acetyltransferase activity"/>
    <property type="evidence" value="ECO:0007669"/>
    <property type="project" value="UniProtKB-UniRule"/>
</dbReference>
<dbReference type="GO" id="GO:0030145">
    <property type="term" value="F:manganese ion binding"/>
    <property type="evidence" value="ECO:0007669"/>
    <property type="project" value="UniProtKB-UniRule"/>
</dbReference>
<dbReference type="GO" id="GO:0009098">
    <property type="term" value="P:L-leucine biosynthetic process"/>
    <property type="evidence" value="ECO:0007669"/>
    <property type="project" value="UniProtKB-UniRule"/>
</dbReference>
<dbReference type="CDD" id="cd07940">
    <property type="entry name" value="DRE_TIM_IPMS"/>
    <property type="match status" value="1"/>
</dbReference>
<dbReference type="FunFam" id="1.10.238.260:FF:000001">
    <property type="entry name" value="2-isopropylmalate synthase"/>
    <property type="match status" value="1"/>
</dbReference>
<dbReference type="FunFam" id="3.20.20.70:FF:000010">
    <property type="entry name" value="2-isopropylmalate synthase"/>
    <property type="match status" value="1"/>
</dbReference>
<dbReference type="FunFam" id="3.30.160.270:FF:000003">
    <property type="entry name" value="2-isopropylmalate synthase"/>
    <property type="match status" value="1"/>
</dbReference>
<dbReference type="Gene3D" id="1.10.238.260">
    <property type="match status" value="1"/>
</dbReference>
<dbReference type="Gene3D" id="3.30.160.270">
    <property type="match status" value="1"/>
</dbReference>
<dbReference type="Gene3D" id="3.20.20.70">
    <property type="entry name" value="Aldolase class I"/>
    <property type="match status" value="1"/>
</dbReference>
<dbReference type="HAMAP" id="MF_01025">
    <property type="entry name" value="LeuA_type1"/>
    <property type="match status" value="1"/>
</dbReference>
<dbReference type="InterPro" id="IPR050073">
    <property type="entry name" value="2-IPM_HCS-like"/>
</dbReference>
<dbReference type="InterPro" id="IPR013709">
    <property type="entry name" value="2-isopropylmalate_synth_dimer"/>
</dbReference>
<dbReference type="InterPro" id="IPR002034">
    <property type="entry name" value="AIPM/Hcit_synth_CS"/>
</dbReference>
<dbReference type="InterPro" id="IPR013785">
    <property type="entry name" value="Aldolase_TIM"/>
</dbReference>
<dbReference type="InterPro" id="IPR054691">
    <property type="entry name" value="LeuA/HCS_post-cat"/>
</dbReference>
<dbReference type="InterPro" id="IPR036230">
    <property type="entry name" value="LeuA_allosteric_dom_sf"/>
</dbReference>
<dbReference type="InterPro" id="IPR005671">
    <property type="entry name" value="LeuA_bact_synth"/>
</dbReference>
<dbReference type="InterPro" id="IPR000891">
    <property type="entry name" value="PYR_CT"/>
</dbReference>
<dbReference type="NCBIfam" id="TIGR00973">
    <property type="entry name" value="leuA_bact"/>
    <property type="match status" value="1"/>
</dbReference>
<dbReference type="NCBIfam" id="NF002086">
    <property type="entry name" value="PRK00915.1-3"/>
    <property type="match status" value="1"/>
</dbReference>
<dbReference type="PANTHER" id="PTHR10277:SF9">
    <property type="entry name" value="2-ISOPROPYLMALATE SYNTHASE 1, CHLOROPLASTIC-RELATED"/>
    <property type="match status" value="1"/>
</dbReference>
<dbReference type="PANTHER" id="PTHR10277">
    <property type="entry name" value="HOMOCITRATE SYNTHASE-RELATED"/>
    <property type="match status" value="1"/>
</dbReference>
<dbReference type="Pfam" id="PF22617">
    <property type="entry name" value="HCS_D2"/>
    <property type="match status" value="1"/>
</dbReference>
<dbReference type="Pfam" id="PF00682">
    <property type="entry name" value="HMGL-like"/>
    <property type="match status" value="1"/>
</dbReference>
<dbReference type="Pfam" id="PF08502">
    <property type="entry name" value="LeuA_dimer"/>
    <property type="match status" value="1"/>
</dbReference>
<dbReference type="SMART" id="SM00917">
    <property type="entry name" value="LeuA_dimer"/>
    <property type="match status" value="1"/>
</dbReference>
<dbReference type="SUPFAM" id="SSF110921">
    <property type="entry name" value="2-isopropylmalate synthase LeuA, allosteric (dimerisation) domain"/>
    <property type="match status" value="1"/>
</dbReference>
<dbReference type="SUPFAM" id="SSF51569">
    <property type="entry name" value="Aldolase"/>
    <property type="match status" value="1"/>
</dbReference>
<dbReference type="PROSITE" id="PS00815">
    <property type="entry name" value="AIPM_HOMOCIT_SYNTH_1"/>
    <property type="match status" value="1"/>
</dbReference>
<dbReference type="PROSITE" id="PS00816">
    <property type="entry name" value="AIPM_HOMOCIT_SYNTH_2"/>
    <property type="match status" value="1"/>
</dbReference>
<dbReference type="PROSITE" id="PS50991">
    <property type="entry name" value="PYR_CT"/>
    <property type="match status" value="1"/>
</dbReference>
<accession>Q7VBG1</accession>
<comment type="function">
    <text evidence="1">Catalyzes the condensation of the acetyl group of acetyl-CoA with 3-methyl-2-oxobutanoate (2-ketoisovalerate) to form 3-carboxy-3-hydroxy-4-methylpentanoate (2-isopropylmalate).</text>
</comment>
<comment type="catalytic activity">
    <reaction evidence="1">
        <text>3-methyl-2-oxobutanoate + acetyl-CoA + H2O = (2S)-2-isopropylmalate + CoA + H(+)</text>
        <dbReference type="Rhea" id="RHEA:21524"/>
        <dbReference type="ChEBI" id="CHEBI:1178"/>
        <dbReference type="ChEBI" id="CHEBI:11851"/>
        <dbReference type="ChEBI" id="CHEBI:15377"/>
        <dbReference type="ChEBI" id="CHEBI:15378"/>
        <dbReference type="ChEBI" id="CHEBI:57287"/>
        <dbReference type="ChEBI" id="CHEBI:57288"/>
        <dbReference type="EC" id="2.3.3.13"/>
    </reaction>
</comment>
<comment type="cofactor">
    <cofactor evidence="1">
        <name>Mn(2+)</name>
        <dbReference type="ChEBI" id="CHEBI:29035"/>
    </cofactor>
</comment>
<comment type="pathway">
    <text evidence="1">Amino-acid biosynthesis; L-leucine biosynthesis; L-leucine from 3-methyl-2-oxobutanoate: step 1/4.</text>
</comment>
<comment type="subunit">
    <text evidence="1">Homodimer.</text>
</comment>
<comment type="subcellular location">
    <subcellularLocation>
        <location evidence="1">Cytoplasm</location>
    </subcellularLocation>
</comment>
<comment type="similarity">
    <text evidence="1">Belongs to the alpha-IPM synthase/homocitrate synthase family. LeuA type 1 subfamily.</text>
</comment>
<gene>
    <name evidence="1" type="primary">leuA</name>
    <name type="ordered locus">Pro_1134</name>
</gene>
<protein>
    <recommendedName>
        <fullName evidence="1">2-isopropylmalate synthase</fullName>
        <ecNumber evidence="1">2.3.3.13</ecNumber>
    </recommendedName>
    <alternativeName>
        <fullName evidence="1">Alpha-IPM synthase</fullName>
    </alternativeName>
    <alternativeName>
        <fullName evidence="1">Alpha-isopropylmalate synthase</fullName>
    </alternativeName>
</protein>
<feature type="chain" id="PRO_0000140369" description="2-isopropylmalate synthase">
    <location>
        <begin position="1"/>
        <end position="536"/>
    </location>
</feature>
<feature type="domain" description="Pyruvate carboxyltransferase" evidence="1">
    <location>
        <begin position="8"/>
        <end position="273"/>
    </location>
</feature>
<feature type="region of interest" description="Regulatory domain" evidence="1">
    <location>
        <begin position="408"/>
        <end position="536"/>
    </location>
</feature>
<feature type="binding site" evidence="1">
    <location>
        <position position="17"/>
    </location>
    <ligand>
        <name>Mn(2+)</name>
        <dbReference type="ChEBI" id="CHEBI:29035"/>
    </ligand>
</feature>
<feature type="binding site" evidence="1">
    <location>
        <position position="208"/>
    </location>
    <ligand>
        <name>Mn(2+)</name>
        <dbReference type="ChEBI" id="CHEBI:29035"/>
    </ligand>
</feature>
<feature type="binding site" evidence="1">
    <location>
        <position position="210"/>
    </location>
    <ligand>
        <name>Mn(2+)</name>
        <dbReference type="ChEBI" id="CHEBI:29035"/>
    </ligand>
</feature>
<feature type="binding site" evidence="1">
    <location>
        <position position="244"/>
    </location>
    <ligand>
        <name>Mn(2+)</name>
        <dbReference type="ChEBI" id="CHEBI:29035"/>
    </ligand>
</feature>
<keyword id="KW-0028">Amino-acid biosynthesis</keyword>
<keyword id="KW-0100">Branched-chain amino acid biosynthesis</keyword>
<keyword id="KW-0963">Cytoplasm</keyword>
<keyword id="KW-0432">Leucine biosynthesis</keyword>
<keyword id="KW-0464">Manganese</keyword>
<keyword id="KW-0479">Metal-binding</keyword>
<keyword id="KW-1185">Reference proteome</keyword>
<keyword id="KW-0808">Transferase</keyword>
<sequence>MAKDPGRVLIFDTTLRDGEQSPGASLNLEEKLAIAQQLARLGVDIIEAGFPYASQGDFKAVQRIADQVGGEEGPIICGLARASKADIKACAEAIAPAPRKRIHTFIATSDIHLKHKLRKSRADVLKIVPEMVGYARSLASDVEFSCEDAARSDPDFMYEVIESAIAAGAGTINIPDTVGYITPAEFGDLIIGINKNVSNIDESILSVHGHNDLGLAVANFLEAVKNGARQLECTINGIGERAGNAALEELVMALHVRRRYFNPFFGKDSESPTPLTAIRTEEITKTSRLVSNLTGMVVQPNKAIVGANAFAHESGIHQDGVLKNPLTYEIVDAKTVGLAENRISLGKLSGRSAVRARLEELGYDLTREDLNDAFARFKDLADRKREISDRDLEAIVSEQVMQPEARFKLHLVQVSCGTALRPTATVTIADQDGIENTAVALGTGPVDAVCKALRSLTNEKNDLIEFSVKSVTEGIDALGEVTIRLRRDGKIFSGHSADTDVVVAAAQAYINALNRLVYSLKKSSLHPQHDVVKANL</sequence>
<proteinExistence type="inferred from homology"/>
<reference key="1">
    <citation type="journal article" date="2003" name="Proc. Natl. Acad. Sci. U.S.A.">
        <title>Genome sequence of the cyanobacterium Prochlorococcus marinus SS120, a nearly minimal oxyphototrophic genome.</title>
        <authorList>
            <person name="Dufresne A."/>
            <person name="Salanoubat M."/>
            <person name="Partensky F."/>
            <person name="Artiguenave F."/>
            <person name="Axmann I.M."/>
            <person name="Barbe V."/>
            <person name="Duprat S."/>
            <person name="Galperin M.Y."/>
            <person name="Koonin E.V."/>
            <person name="Le Gall F."/>
            <person name="Makarova K.S."/>
            <person name="Ostrowski M."/>
            <person name="Oztas S."/>
            <person name="Robert C."/>
            <person name="Rogozin I.B."/>
            <person name="Scanlan D.J."/>
            <person name="Tandeau de Marsac N."/>
            <person name="Weissenbach J."/>
            <person name="Wincker P."/>
            <person name="Wolf Y.I."/>
            <person name="Hess W.R."/>
        </authorList>
    </citation>
    <scope>NUCLEOTIDE SEQUENCE [LARGE SCALE GENOMIC DNA]</scope>
    <source>
        <strain>SARG / CCMP1375 / SS120</strain>
    </source>
</reference>
<organism>
    <name type="scientific">Prochlorococcus marinus (strain SARG / CCMP1375 / SS120)</name>
    <dbReference type="NCBI Taxonomy" id="167539"/>
    <lineage>
        <taxon>Bacteria</taxon>
        <taxon>Bacillati</taxon>
        <taxon>Cyanobacteriota</taxon>
        <taxon>Cyanophyceae</taxon>
        <taxon>Synechococcales</taxon>
        <taxon>Prochlorococcaceae</taxon>
        <taxon>Prochlorococcus</taxon>
    </lineage>
</organism>
<name>LEU1_PROMA</name>
<evidence type="ECO:0000255" key="1">
    <source>
        <dbReference type="HAMAP-Rule" id="MF_01025"/>
    </source>
</evidence>